<keyword id="KW-0963">Cytoplasm</keyword>
<keyword id="KW-0489">Methyltransferase</keyword>
<keyword id="KW-1185">Reference proteome</keyword>
<keyword id="KW-0698">rRNA processing</keyword>
<keyword id="KW-0949">S-adenosyl-L-methionine</keyword>
<keyword id="KW-0808">Transferase</keyword>
<reference key="1">
    <citation type="journal article" date="2007" name="J. Bacteriol.">
        <title>Genome of the opportunistic pathogen Streptococcus sanguinis.</title>
        <authorList>
            <person name="Xu P."/>
            <person name="Alves J.M."/>
            <person name="Kitten T."/>
            <person name="Brown A."/>
            <person name="Chen Z."/>
            <person name="Ozaki L.S."/>
            <person name="Manque P."/>
            <person name="Ge X."/>
            <person name="Serrano M.G."/>
            <person name="Puiu D."/>
            <person name="Hendricks S."/>
            <person name="Wang Y."/>
            <person name="Chaplin M.D."/>
            <person name="Akan D."/>
            <person name="Paik S."/>
            <person name="Peterson D.L."/>
            <person name="Macrina F.L."/>
            <person name="Buck G.A."/>
        </authorList>
    </citation>
    <scope>NUCLEOTIDE SEQUENCE [LARGE SCALE GENOMIC DNA]</scope>
    <source>
        <strain>SK36</strain>
    </source>
</reference>
<evidence type="ECO:0000255" key="1">
    <source>
        <dbReference type="HAMAP-Rule" id="MF_01007"/>
    </source>
</evidence>
<dbReference type="EC" id="2.1.1.199" evidence="1"/>
<dbReference type="EMBL" id="CP000387">
    <property type="protein sequence ID" value="ABN45254.1"/>
    <property type="molecule type" value="Genomic_DNA"/>
</dbReference>
<dbReference type="RefSeq" id="WP_002903293.1">
    <property type="nucleotide sequence ID" value="NC_009009.1"/>
</dbReference>
<dbReference type="RefSeq" id="YP_001035804.1">
    <property type="nucleotide sequence ID" value="NC_009009.1"/>
</dbReference>
<dbReference type="SMR" id="A3CPZ9"/>
<dbReference type="STRING" id="388919.SSA_1873"/>
<dbReference type="KEGG" id="ssa:SSA_1873"/>
<dbReference type="PATRIC" id="fig|388919.9.peg.1778"/>
<dbReference type="eggNOG" id="COG0275">
    <property type="taxonomic scope" value="Bacteria"/>
</dbReference>
<dbReference type="HOGENOM" id="CLU_038422_2_0_9"/>
<dbReference type="OrthoDB" id="9806637at2"/>
<dbReference type="Proteomes" id="UP000002148">
    <property type="component" value="Chromosome"/>
</dbReference>
<dbReference type="GO" id="GO:0005737">
    <property type="term" value="C:cytoplasm"/>
    <property type="evidence" value="ECO:0007669"/>
    <property type="project" value="UniProtKB-SubCell"/>
</dbReference>
<dbReference type="GO" id="GO:0071424">
    <property type="term" value="F:rRNA (cytosine-N4-)-methyltransferase activity"/>
    <property type="evidence" value="ECO:0007669"/>
    <property type="project" value="UniProtKB-UniRule"/>
</dbReference>
<dbReference type="GO" id="GO:0070475">
    <property type="term" value="P:rRNA base methylation"/>
    <property type="evidence" value="ECO:0007669"/>
    <property type="project" value="UniProtKB-UniRule"/>
</dbReference>
<dbReference type="FunFam" id="1.10.150.170:FF:000001">
    <property type="entry name" value="Ribosomal RNA small subunit methyltransferase H"/>
    <property type="match status" value="1"/>
</dbReference>
<dbReference type="Gene3D" id="1.10.150.170">
    <property type="entry name" value="Putative methyltransferase TM0872, insert domain"/>
    <property type="match status" value="1"/>
</dbReference>
<dbReference type="Gene3D" id="3.40.50.150">
    <property type="entry name" value="Vaccinia Virus protein VP39"/>
    <property type="match status" value="1"/>
</dbReference>
<dbReference type="HAMAP" id="MF_01007">
    <property type="entry name" value="16SrRNA_methyltr_H"/>
    <property type="match status" value="1"/>
</dbReference>
<dbReference type="InterPro" id="IPR002903">
    <property type="entry name" value="RsmH"/>
</dbReference>
<dbReference type="InterPro" id="IPR023397">
    <property type="entry name" value="SAM-dep_MeTrfase_MraW_recog"/>
</dbReference>
<dbReference type="InterPro" id="IPR029063">
    <property type="entry name" value="SAM-dependent_MTases_sf"/>
</dbReference>
<dbReference type="NCBIfam" id="TIGR00006">
    <property type="entry name" value="16S rRNA (cytosine(1402)-N(4))-methyltransferase RsmH"/>
    <property type="match status" value="1"/>
</dbReference>
<dbReference type="PANTHER" id="PTHR11265:SF0">
    <property type="entry name" value="12S RRNA N4-METHYLCYTIDINE METHYLTRANSFERASE"/>
    <property type="match status" value="1"/>
</dbReference>
<dbReference type="PANTHER" id="PTHR11265">
    <property type="entry name" value="S-ADENOSYL-METHYLTRANSFERASE MRAW"/>
    <property type="match status" value="1"/>
</dbReference>
<dbReference type="Pfam" id="PF01795">
    <property type="entry name" value="Methyltransf_5"/>
    <property type="match status" value="1"/>
</dbReference>
<dbReference type="PIRSF" id="PIRSF004486">
    <property type="entry name" value="MraW"/>
    <property type="match status" value="1"/>
</dbReference>
<dbReference type="SUPFAM" id="SSF81799">
    <property type="entry name" value="Putative methyltransferase TM0872, insert domain"/>
    <property type="match status" value="1"/>
</dbReference>
<dbReference type="SUPFAM" id="SSF53335">
    <property type="entry name" value="S-adenosyl-L-methionine-dependent methyltransferases"/>
    <property type="match status" value="1"/>
</dbReference>
<proteinExistence type="inferred from homology"/>
<organism>
    <name type="scientific">Streptococcus sanguinis (strain SK36)</name>
    <dbReference type="NCBI Taxonomy" id="388919"/>
    <lineage>
        <taxon>Bacteria</taxon>
        <taxon>Bacillati</taxon>
        <taxon>Bacillota</taxon>
        <taxon>Bacilli</taxon>
        <taxon>Lactobacillales</taxon>
        <taxon>Streptococcaceae</taxon>
        <taxon>Streptococcus</taxon>
    </lineage>
</organism>
<sequence length="316" mass="35759">MTNEFHHITVLLHETVDQLAVKPDGIYVDATLGGAGHSEYLLSQLGDEGHLYAFDQDQTAIDNAKKRLAPYVERGMVTFIKDNFRHLKSRLQEAGVEEIDGICYDLGVSSPQLDQRERGFSYKQDAPLDMRMNREAALTAFEVVNHYSYQDLVRIFFKYGEDKFSKQIARKIEQARSVKPIETTTELAEIIKSAKPAKELKKKGHPAKQIFQAIRIEVNDELGAADESIQQAIDLLAVDGRIAVITFHSLEDRLTKQLFKEASTVDVPKGLPFIPDELQPKLELVSRKPILPSKEELESNNRAHSAKLRVARKIHK</sequence>
<accession>A3CPZ9</accession>
<name>RSMH_STRSV</name>
<gene>
    <name evidence="1" type="primary">rsmH</name>
    <name type="synonym">mraW</name>
    <name type="ordered locus">SSA_1873</name>
</gene>
<protein>
    <recommendedName>
        <fullName evidence="1">Ribosomal RNA small subunit methyltransferase H</fullName>
        <ecNumber evidence="1">2.1.1.199</ecNumber>
    </recommendedName>
    <alternativeName>
        <fullName evidence="1">16S rRNA m(4)C1402 methyltransferase</fullName>
    </alternativeName>
    <alternativeName>
        <fullName evidence="1">rRNA (cytosine-N(4)-)-methyltransferase RsmH</fullName>
    </alternativeName>
</protein>
<feature type="chain" id="PRO_0000387164" description="Ribosomal RNA small subunit methyltransferase H">
    <location>
        <begin position="1"/>
        <end position="316"/>
    </location>
</feature>
<feature type="binding site" evidence="1">
    <location>
        <begin position="35"/>
        <end position="37"/>
    </location>
    <ligand>
        <name>S-adenosyl-L-methionine</name>
        <dbReference type="ChEBI" id="CHEBI:59789"/>
    </ligand>
</feature>
<feature type="binding site" evidence="1">
    <location>
        <position position="55"/>
    </location>
    <ligand>
        <name>S-adenosyl-L-methionine</name>
        <dbReference type="ChEBI" id="CHEBI:59789"/>
    </ligand>
</feature>
<feature type="binding site" evidence="1">
    <location>
        <position position="84"/>
    </location>
    <ligand>
        <name>S-adenosyl-L-methionine</name>
        <dbReference type="ChEBI" id="CHEBI:59789"/>
    </ligand>
</feature>
<feature type="binding site" evidence="1">
    <location>
        <position position="105"/>
    </location>
    <ligand>
        <name>S-adenosyl-L-methionine</name>
        <dbReference type="ChEBI" id="CHEBI:59789"/>
    </ligand>
</feature>
<feature type="binding site" evidence="1">
    <location>
        <position position="112"/>
    </location>
    <ligand>
        <name>S-adenosyl-L-methionine</name>
        <dbReference type="ChEBI" id="CHEBI:59789"/>
    </ligand>
</feature>
<comment type="function">
    <text evidence="1">Specifically methylates the N4 position of cytidine in position 1402 (C1402) of 16S rRNA.</text>
</comment>
<comment type="catalytic activity">
    <reaction evidence="1">
        <text>cytidine(1402) in 16S rRNA + S-adenosyl-L-methionine = N(4)-methylcytidine(1402) in 16S rRNA + S-adenosyl-L-homocysteine + H(+)</text>
        <dbReference type="Rhea" id="RHEA:42928"/>
        <dbReference type="Rhea" id="RHEA-COMP:10286"/>
        <dbReference type="Rhea" id="RHEA-COMP:10287"/>
        <dbReference type="ChEBI" id="CHEBI:15378"/>
        <dbReference type="ChEBI" id="CHEBI:57856"/>
        <dbReference type="ChEBI" id="CHEBI:59789"/>
        <dbReference type="ChEBI" id="CHEBI:74506"/>
        <dbReference type="ChEBI" id="CHEBI:82748"/>
        <dbReference type="EC" id="2.1.1.199"/>
    </reaction>
</comment>
<comment type="subcellular location">
    <subcellularLocation>
        <location evidence="1">Cytoplasm</location>
    </subcellularLocation>
</comment>
<comment type="similarity">
    <text evidence="1">Belongs to the methyltransferase superfamily. RsmH family.</text>
</comment>